<dbReference type="EC" id="1.1.1.45" evidence="3"/>
<dbReference type="EMBL" id="M22743">
    <property type="protein sequence ID" value="AAA31207.1"/>
    <property type="molecule type" value="mRNA"/>
</dbReference>
<dbReference type="EMBL" id="AB359905">
    <property type="protein sequence ID" value="BAF76380.1"/>
    <property type="molecule type" value="mRNA"/>
</dbReference>
<dbReference type="PIR" id="A31992">
    <property type="entry name" value="A31992"/>
</dbReference>
<dbReference type="RefSeq" id="NP_001075747.1">
    <property type="nucleotide sequence ID" value="NM_001082278.1"/>
</dbReference>
<dbReference type="PDB" id="3ADO">
    <property type="method" value="X-ray"/>
    <property type="resolution" value="1.70 A"/>
    <property type="chains" value="A=1-319"/>
</dbReference>
<dbReference type="PDB" id="3ADP">
    <property type="method" value="X-ray"/>
    <property type="resolution" value="1.85 A"/>
    <property type="chains" value="A=1-319"/>
</dbReference>
<dbReference type="PDBsum" id="3ADO"/>
<dbReference type="PDBsum" id="3ADP"/>
<dbReference type="SMR" id="P14755"/>
<dbReference type="FunCoup" id="P14755">
    <property type="interactions" value="166"/>
</dbReference>
<dbReference type="STRING" id="9986.ENSOCUP00000011580"/>
<dbReference type="MoonProt" id="P14755"/>
<dbReference type="iPTMnet" id="P14755"/>
<dbReference type="PaxDb" id="9986-ENSOCUP00000011580"/>
<dbReference type="GeneID" id="100009108"/>
<dbReference type="KEGG" id="ocu:100009108"/>
<dbReference type="CTD" id="51084"/>
<dbReference type="eggNOG" id="KOG2305">
    <property type="taxonomic scope" value="Eukaryota"/>
</dbReference>
<dbReference type="InParanoid" id="P14755"/>
<dbReference type="OrthoDB" id="2021159at2759"/>
<dbReference type="BRENDA" id="1.1.1.45">
    <property type="organism ID" value="1749"/>
</dbReference>
<dbReference type="SABIO-RK" id="P14755"/>
<dbReference type="EvolutionaryTrace" id="P14755"/>
<dbReference type="Proteomes" id="UP000001811">
    <property type="component" value="Unplaced"/>
</dbReference>
<dbReference type="GO" id="GO:0005829">
    <property type="term" value="C:cytosol"/>
    <property type="evidence" value="ECO:0000314"/>
    <property type="project" value="UniProtKB"/>
</dbReference>
<dbReference type="GO" id="GO:0050104">
    <property type="term" value="F:L-gulonate 3-dehydrogenase activity"/>
    <property type="evidence" value="ECO:0000314"/>
    <property type="project" value="UniProtKB"/>
</dbReference>
<dbReference type="GO" id="GO:0070403">
    <property type="term" value="F:NAD+ binding"/>
    <property type="evidence" value="ECO:0000314"/>
    <property type="project" value="UniProtKB"/>
</dbReference>
<dbReference type="GO" id="GO:0042803">
    <property type="term" value="F:protein homodimerization activity"/>
    <property type="evidence" value="ECO:0000353"/>
    <property type="project" value="UniProtKB"/>
</dbReference>
<dbReference type="GO" id="GO:0005212">
    <property type="term" value="F:structural constituent of eye lens"/>
    <property type="evidence" value="ECO:0007669"/>
    <property type="project" value="UniProtKB-KW"/>
</dbReference>
<dbReference type="GO" id="GO:0006631">
    <property type="term" value="P:fatty acid metabolic process"/>
    <property type="evidence" value="ECO:0007669"/>
    <property type="project" value="InterPro"/>
</dbReference>
<dbReference type="FunFam" id="3.40.50.720:FF:000356">
    <property type="entry name" value="Lambda-crystallin homolog"/>
    <property type="match status" value="1"/>
</dbReference>
<dbReference type="FunFam" id="1.10.1040.10:FF:000023">
    <property type="entry name" value="lambda-crystallin homolog"/>
    <property type="match status" value="1"/>
</dbReference>
<dbReference type="Gene3D" id="1.10.1040.10">
    <property type="entry name" value="N-(1-d-carboxylethyl)-l-norvaline Dehydrogenase, domain 2"/>
    <property type="match status" value="1"/>
</dbReference>
<dbReference type="Gene3D" id="3.40.50.720">
    <property type="entry name" value="NAD(P)-binding Rossmann-like Domain"/>
    <property type="match status" value="1"/>
</dbReference>
<dbReference type="InterPro" id="IPR022694">
    <property type="entry name" value="3-OHacyl-CoA_DH"/>
</dbReference>
<dbReference type="InterPro" id="IPR006180">
    <property type="entry name" value="3-OHacyl-CoA_DH_CS"/>
</dbReference>
<dbReference type="InterPro" id="IPR006176">
    <property type="entry name" value="3-OHacyl-CoA_DH_NAD-bd"/>
</dbReference>
<dbReference type="InterPro" id="IPR006108">
    <property type="entry name" value="3HC_DH_C"/>
</dbReference>
<dbReference type="InterPro" id="IPR008927">
    <property type="entry name" value="6-PGluconate_DH-like_C_sf"/>
</dbReference>
<dbReference type="InterPro" id="IPR013328">
    <property type="entry name" value="6PGD_dom2"/>
</dbReference>
<dbReference type="InterPro" id="IPR036291">
    <property type="entry name" value="NAD(P)-bd_dom_sf"/>
</dbReference>
<dbReference type="PANTHER" id="PTHR48075">
    <property type="entry name" value="3-HYDROXYACYL-COA DEHYDROGENASE FAMILY PROTEIN"/>
    <property type="match status" value="1"/>
</dbReference>
<dbReference type="PANTHER" id="PTHR48075:SF1">
    <property type="entry name" value="LAMBDA-CRYSTALLIN HOMOLOG"/>
    <property type="match status" value="1"/>
</dbReference>
<dbReference type="Pfam" id="PF00725">
    <property type="entry name" value="3HCDH"/>
    <property type="match status" value="1"/>
</dbReference>
<dbReference type="Pfam" id="PF02737">
    <property type="entry name" value="3HCDH_N"/>
    <property type="match status" value="1"/>
</dbReference>
<dbReference type="PIRSF" id="PIRSF000105">
    <property type="entry name" value="HCDH"/>
    <property type="match status" value="1"/>
</dbReference>
<dbReference type="SUPFAM" id="SSF48179">
    <property type="entry name" value="6-phosphogluconate dehydrogenase C-terminal domain-like"/>
    <property type="match status" value="1"/>
</dbReference>
<dbReference type="SUPFAM" id="SSF51735">
    <property type="entry name" value="NAD(P)-binding Rossmann-fold domains"/>
    <property type="match status" value="1"/>
</dbReference>
<dbReference type="PROSITE" id="PS00067">
    <property type="entry name" value="3HCDH"/>
    <property type="match status" value="1"/>
</dbReference>
<protein>
    <recommendedName>
        <fullName>Lambda-crystallin</fullName>
        <ecNumber evidence="3">1.1.1.45</ecNumber>
    </recommendedName>
    <alternativeName>
        <fullName>L-gulonate 3-dehydrogenase</fullName>
        <shortName>Gul3DH</shortName>
    </alternativeName>
</protein>
<keyword id="KW-0002">3D-structure</keyword>
<keyword id="KW-0007">Acetylation</keyword>
<keyword id="KW-0963">Cytoplasm</keyword>
<keyword id="KW-0903">Direct protein sequencing</keyword>
<keyword id="KW-0273">Eye lens protein</keyword>
<keyword id="KW-0520">NAD</keyword>
<keyword id="KW-0560">Oxidoreductase</keyword>
<keyword id="KW-0597">Phosphoprotein</keyword>
<keyword id="KW-1185">Reference proteome</keyword>
<comment type="function">
    <text evidence="3">Functions as a crystallin in the rabbit eye lens. Has high L-gulonate 3-dehydrogenase activity. It also exhibits low dehydrogenase activity toward L-3-hydroxybutyrate (HBA) and L-threonate.</text>
</comment>
<comment type="catalytic activity">
    <reaction evidence="3">
        <text>L-gulonate + NAD(+) = 3-dehydro-L-gulonate + NADH + H(+)</text>
        <dbReference type="Rhea" id="RHEA:12889"/>
        <dbReference type="ChEBI" id="CHEBI:13115"/>
        <dbReference type="ChEBI" id="CHEBI:15378"/>
        <dbReference type="ChEBI" id="CHEBI:57540"/>
        <dbReference type="ChEBI" id="CHEBI:57655"/>
        <dbReference type="ChEBI" id="CHEBI:57945"/>
        <dbReference type="EC" id="1.1.1.45"/>
    </reaction>
</comment>
<comment type="activity regulation">
    <text evidence="3">Inhibited by malonate and by inorganic phosphate.</text>
</comment>
<comment type="biophysicochemical properties">
    <kinetics>
        <KM evidence="3">0.011 mM for NAD</KM>
        <KM evidence="3">5.0E-4 mM for NADH</KM>
    </kinetics>
</comment>
<comment type="subunit">
    <text evidence="3 4">Homodimer.</text>
</comment>
<comment type="subcellular location">
    <subcellularLocation>
        <location evidence="3">Cytoplasm</location>
    </subcellularLocation>
</comment>
<comment type="tissue specificity">
    <text evidence="3">Detected in eye lens, kidney, liver, heart, lung, brain and testis.</text>
</comment>
<comment type="similarity">
    <text evidence="5">Belongs to the 3-hydroxyacyl-CoA dehydrogenase family.</text>
</comment>
<accession>P14755</accession>
<accession>A7VMV1</accession>
<name>CRYL1_RABIT</name>
<sequence>MASPAAGDVLIVGSGLVGRSWAMLFASGGFRVKLYDIEPRQITGALENIRKEMKSLQQSGSLKGSLSAEEQLSLISSCTNLAEAVEGVVHIQECVPENLDLKRKIFAQLDSIVDDRVVLSSSSSCLLPSKLFTGLAHVKQCIVAHPVNPPYYIPLVELVPHPETSPATVDRTHALMRKIGQSPVRVLKEIDGFVLNRLQYAIISEAWRLVEEGIVSPSDLDLVMSDGLGMRYAFIGPLETMHLNAEGMLSYCDRYSEGMKRVLKSFGSIPEFSGATVEKVNQAMCKKVPADPEHLAARREWRDECLKRLAKLKRQMQPQ</sequence>
<proteinExistence type="evidence at protein level"/>
<evidence type="ECO:0000250" key="1">
    <source>
        <dbReference type="UniProtKB" id="Q811X6"/>
    </source>
</evidence>
<evidence type="ECO:0000250" key="2">
    <source>
        <dbReference type="UniProtKB" id="Q9Y2S2"/>
    </source>
</evidence>
<evidence type="ECO:0000269" key="3">
    <source>
    </source>
</evidence>
<evidence type="ECO:0000269" key="4">
    <source ref="3"/>
</evidence>
<evidence type="ECO:0000305" key="5"/>
<evidence type="ECO:0000305" key="6">
    <source>
    </source>
</evidence>
<evidence type="ECO:0007829" key="7">
    <source>
        <dbReference type="PDB" id="3ADO"/>
    </source>
</evidence>
<organism>
    <name type="scientific">Oryctolagus cuniculus</name>
    <name type="common">Rabbit</name>
    <dbReference type="NCBI Taxonomy" id="9986"/>
    <lineage>
        <taxon>Eukaryota</taxon>
        <taxon>Metazoa</taxon>
        <taxon>Chordata</taxon>
        <taxon>Craniata</taxon>
        <taxon>Vertebrata</taxon>
        <taxon>Euteleostomi</taxon>
        <taxon>Mammalia</taxon>
        <taxon>Eutheria</taxon>
        <taxon>Euarchontoglires</taxon>
        <taxon>Glires</taxon>
        <taxon>Lagomorpha</taxon>
        <taxon>Leporidae</taxon>
        <taxon>Oryctolagus</taxon>
    </lineage>
</organism>
<reference key="1">
    <citation type="journal article" date="1988" name="J. Biol. Chem.">
        <title>Lambda-crystallin, a major rabbit lens protein, is related to hydroxyacyl-coenzyme A dehydrogenases.</title>
        <authorList>
            <person name="Mulders J.W.M."/>
            <person name="Hendriks W."/>
            <person name="Blankesteijn W.M."/>
            <person name="Bloemendal H."/>
            <person name="de Jong W.W."/>
        </authorList>
    </citation>
    <scope>NUCLEOTIDE SEQUENCE [MRNA]</scope>
    <scope>ACETYLATION AT ALA-2</scope>
    <scope>PARTIAL PROTEIN SEQUENCE</scope>
    <source>
        <tissue>Lens</tissue>
    </source>
</reference>
<reference key="2">
    <citation type="journal article" date="2005" name="J. Biochem.">
        <title>Structural and functional characterization of rabbit and human L-gulonate 3-dehydrogenase.</title>
        <authorList>
            <person name="Ishikura S."/>
            <person name="Usami N."/>
            <person name="Araki M."/>
            <person name="Hara A."/>
        </authorList>
    </citation>
    <scope>NUCLEOTIDE SEQUENCE [MRNA]</scope>
    <scope>PARTIAL PROTEIN SEQUENCE</scope>
    <scope>FUNCTION</scope>
    <scope>SUBUNIT</scope>
    <scope>CATALYTIC ACTIVITY</scope>
    <scope>ACTIVITY REGULATION</scope>
    <scope>BIOPHYSICOCHEMICAL PROPERTIES</scope>
    <scope>MUTAGENESIS OF ASP-36; SER-124; HIS-145; GLU-157 AND ASN-196</scope>
    <scope>TISSUE SPECIFICITY</scope>
    <scope>SUBCELLULAR LOCATION</scope>
    <source>
        <tissue>Liver</tissue>
    </source>
</reference>
<reference key="3">
    <citation type="submission" date="2006-11" db="PDB data bank">
        <title>Crystal structure of the rabbit L-gulonate 3-dehydrogenase.</title>
        <authorList>
            <consortium name="RIKEN structural genomics initiative (RSGI)"/>
        </authorList>
    </citation>
    <scope>X-RAY CRYSTALLOGRAPHY (1.7 ANGSTROMS) IN COMPLEX WITH NAD</scope>
</reference>
<gene>
    <name type="primary">CRYL1</name>
    <name type="synonym">GUL3DH</name>
</gene>
<feature type="initiator methionine" description="Removed">
    <location>
        <position position="1"/>
    </location>
</feature>
<feature type="chain" id="PRO_0000109322" description="Lambda-crystallin">
    <location>
        <begin position="2"/>
        <end position="319"/>
    </location>
</feature>
<feature type="binding site" evidence="4">
    <location>
        <begin position="16"/>
        <end position="17"/>
    </location>
    <ligand>
        <name>NAD(+)</name>
        <dbReference type="ChEBI" id="CHEBI:57540"/>
    </ligand>
</feature>
<feature type="binding site" evidence="4">
    <location>
        <position position="36"/>
    </location>
    <ligand>
        <name>NAD(+)</name>
        <dbReference type="ChEBI" id="CHEBI:57540"/>
    </ligand>
</feature>
<feature type="binding site" evidence="4">
    <location>
        <position position="97"/>
    </location>
    <ligand>
        <name>NAD(+)</name>
        <dbReference type="ChEBI" id="CHEBI:57540"/>
    </ligand>
</feature>
<feature type="binding site" evidence="4">
    <location>
        <position position="102"/>
    </location>
    <ligand>
        <name>NAD(+)</name>
        <dbReference type="ChEBI" id="CHEBI:57540"/>
    </ligand>
</feature>
<feature type="modified residue" description="N-acetylalanine" evidence="6">
    <location>
        <position position="2"/>
    </location>
</feature>
<feature type="modified residue" description="Phosphoserine" evidence="1">
    <location>
        <position position="3"/>
    </location>
</feature>
<feature type="modified residue" description="Phosphoserine" evidence="2">
    <location>
        <position position="111"/>
    </location>
</feature>
<feature type="mutagenesis site" description="Reduces enzyme activity and alters specificity, so that NADP can be used as cosubstrate." evidence="3">
    <original>D</original>
    <variation>R</variation>
    <location>
        <position position="36"/>
    </location>
</feature>
<feature type="mutagenesis site" description="Reduces enzyme activity 500-fold." evidence="3">
    <original>S</original>
    <variation>A</variation>
    <location>
        <position position="124"/>
    </location>
</feature>
<feature type="mutagenesis site" description="Abolishes enzyme activity." evidence="3">
    <original>H</original>
    <variation>Q</variation>
    <location>
        <position position="145"/>
    </location>
</feature>
<feature type="mutagenesis site" description="No major effect on enzyme activity." evidence="3">
    <original>E</original>
    <variation>Q</variation>
    <location>
        <position position="157"/>
    </location>
</feature>
<feature type="mutagenesis site" description="Abolishes enzyme activity." evidence="3">
    <original>N</original>
    <variation>D</variation>
    <variation>Q</variation>
    <location>
        <position position="196"/>
    </location>
</feature>
<feature type="sequence conflict" description="In Ref. 1; AAA31207." evidence="5" ref="1">
    <original>C</original>
    <variation>S</variation>
    <location>
        <position position="252"/>
    </location>
</feature>
<feature type="sequence conflict" description="In Ref. 1; AAA31207." evidence="5" ref="1">
    <original>V</original>
    <variation>G</variation>
    <location>
        <position position="288"/>
    </location>
</feature>
<feature type="sequence conflict" description="In Ref. 1; AAA31207." evidence="5" ref="1">
    <original>R</original>
    <variation>RE</variation>
    <location>
        <position position="308"/>
    </location>
</feature>
<feature type="strand" evidence="7">
    <location>
        <begin position="8"/>
        <end position="12"/>
    </location>
</feature>
<feature type="helix" evidence="7">
    <location>
        <begin position="16"/>
        <end position="27"/>
    </location>
</feature>
<feature type="strand" evidence="7">
    <location>
        <begin position="32"/>
        <end position="35"/>
    </location>
</feature>
<feature type="helix" evidence="7">
    <location>
        <begin position="39"/>
        <end position="58"/>
    </location>
</feature>
<feature type="strand" evidence="7">
    <location>
        <begin position="64"/>
        <end position="66"/>
    </location>
</feature>
<feature type="helix" evidence="7">
    <location>
        <begin position="68"/>
        <end position="73"/>
    </location>
</feature>
<feature type="strand" evidence="7">
    <location>
        <begin position="75"/>
        <end position="78"/>
    </location>
</feature>
<feature type="helix" evidence="7">
    <location>
        <begin position="81"/>
        <end position="84"/>
    </location>
</feature>
<feature type="turn" evidence="7">
    <location>
        <begin position="85"/>
        <end position="87"/>
    </location>
</feature>
<feature type="strand" evidence="7">
    <location>
        <begin position="88"/>
        <end position="93"/>
    </location>
</feature>
<feature type="helix" evidence="7">
    <location>
        <begin position="99"/>
        <end position="110"/>
    </location>
</feature>
<feature type="strand" evidence="7">
    <location>
        <begin position="115"/>
        <end position="121"/>
    </location>
</feature>
<feature type="helix" evidence="7">
    <location>
        <begin position="128"/>
        <end position="132"/>
    </location>
</feature>
<feature type="helix" evidence="7">
    <location>
        <begin position="138"/>
        <end position="140"/>
    </location>
</feature>
<feature type="strand" evidence="7">
    <location>
        <begin position="141"/>
        <end position="146"/>
    </location>
</feature>
<feature type="turn" evidence="7">
    <location>
        <begin position="150"/>
        <end position="152"/>
    </location>
</feature>
<feature type="strand" evidence="7">
    <location>
        <begin position="155"/>
        <end position="160"/>
    </location>
</feature>
<feature type="helix" evidence="7">
    <location>
        <begin position="166"/>
        <end position="178"/>
    </location>
</feature>
<feature type="strand" evidence="7">
    <location>
        <begin position="182"/>
        <end position="185"/>
    </location>
</feature>
<feature type="turn" evidence="7">
    <location>
        <begin position="191"/>
        <end position="194"/>
    </location>
</feature>
<feature type="helix" evidence="7">
    <location>
        <begin position="195"/>
        <end position="211"/>
    </location>
</feature>
<feature type="helix" evidence="7">
    <location>
        <begin position="217"/>
        <end position="225"/>
    </location>
</feature>
<feature type="helix" evidence="7">
    <location>
        <begin position="228"/>
        <end position="232"/>
    </location>
</feature>
<feature type="helix" evidence="7">
    <location>
        <begin position="237"/>
        <end position="243"/>
    </location>
</feature>
<feature type="turn" evidence="7">
    <location>
        <begin position="244"/>
        <end position="246"/>
    </location>
</feature>
<feature type="helix" evidence="7">
    <location>
        <begin position="248"/>
        <end position="264"/>
    </location>
</feature>
<feature type="helix" evidence="7">
    <location>
        <begin position="274"/>
        <end position="287"/>
    </location>
</feature>
<feature type="helix" evidence="7">
    <location>
        <begin position="292"/>
        <end position="315"/>
    </location>
</feature>